<evidence type="ECO:0000250" key="1"/>
<evidence type="ECO:0000255" key="2">
    <source>
        <dbReference type="PROSITE-ProRule" id="PRU00028"/>
    </source>
</evidence>
<evidence type="ECO:0000305" key="3"/>
<reference key="1">
    <citation type="journal article" date="1986" name="J. Mol. Biol.">
        <title>Concerted and divergent evolution within the rat gamma-crystallin gene family.</title>
        <authorList>
            <person name="den Dunnen J.T."/>
            <person name="Moormann R.J.M."/>
            <person name="Lubsen N.H."/>
            <person name="Schoenmakers J.G.G."/>
        </authorList>
    </citation>
    <scope>NUCLEOTIDE SEQUENCE</scope>
</reference>
<reference key="2">
    <citation type="journal article" date="1989" name="Gene">
        <title>Nucleotide sequence of the rat gamma-crystallin gene region and comparison with an orthologous human region.</title>
        <authorList>
            <person name="den Dunnen J.T."/>
            <person name="van Neck J.W."/>
            <person name="Cremers F.P.M."/>
            <person name="Lubsen N.H."/>
            <person name="Schoenmakers J.G.G."/>
        </authorList>
    </citation>
    <scope>NUCLEOTIDE SEQUENCE [GENOMIC DNA]</scope>
</reference>
<reference key="3">
    <citation type="journal article" date="1982" name="Proc. Natl. Acad. Sci. U.S.A.">
        <title>Extensive intragenic sequence homology in two distinct rat lens gamma-crystallin cDNAs suggests duplications of a primordial gene.</title>
        <authorList>
            <person name="Moormann R.J.M."/>
            <person name="den Dunnen J.T."/>
            <person name="Bloemendal H."/>
            <person name="Schoenmakers J.G.G."/>
        </authorList>
    </citation>
    <scope>NUCLEOTIDE SEQUENCE [MRNA] OF 5-174</scope>
</reference>
<sequence length="174" mass="20951">MGKITFYEDRGFQGRCYECSSDCPNLQTYFSRCNSIRVDSGCWMLYERPNYQGHQYFLRRGDYPDYQQWMGFSDSIRSCRLIPHTGSHRMRLYEKEDHKGVMMELSEDCSCIQDRFHLSEVRSLHVLEGCWVLYEMPNYRGRQYLLRPQEYRRYHDWGAVDAKAGSLRRVVDLY</sequence>
<name>CRGC_RAT</name>
<dbReference type="EMBL" id="M19359">
    <property type="protein sequence ID" value="AAA40983.1"/>
    <property type="molecule type" value="Genomic_DNA"/>
</dbReference>
<dbReference type="EMBL" id="J00717">
    <property type="protein sequence ID" value="AAA40986.1"/>
    <property type="molecule type" value="mRNA"/>
</dbReference>
<dbReference type="PIR" id="A02934">
    <property type="entry name" value="CYRTG2"/>
</dbReference>
<dbReference type="PIR" id="C24060">
    <property type="entry name" value="C24060"/>
</dbReference>
<dbReference type="PIR" id="I83432">
    <property type="entry name" value="I83432"/>
</dbReference>
<dbReference type="RefSeq" id="NP_001075129.1">
    <property type="nucleotide sequence ID" value="NM_001081660.1"/>
</dbReference>
<dbReference type="SMR" id="P02529"/>
<dbReference type="STRING" id="10116.ENSRNOP00000020078"/>
<dbReference type="iPTMnet" id="P02529"/>
<dbReference type="PhosphoSitePlus" id="P02529"/>
<dbReference type="PaxDb" id="10116-ENSRNOP00000020078"/>
<dbReference type="GeneID" id="24277"/>
<dbReference type="KEGG" id="rno:24277"/>
<dbReference type="UCSC" id="RGD:2421">
    <property type="organism name" value="rat"/>
</dbReference>
<dbReference type="AGR" id="RGD:2421"/>
<dbReference type="CTD" id="1420"/>
<dbReference type="RGD" id="2421">
    <property type="gene designation" value="Crygc"/>
</dbReference>
<dbReference type="InParanoid" id="P02529"/>
<dbReference type="PhylomeDB" id="P02529"/>
<dbReference type="PRO" id="PR:P02529"/>
<dbReference type="Proteomes" id="UP000002494">
    <property type="component" value="Unplaced"/>
</dbReference>
<dbReference type="GO" id="GO:0005737">
    <property type="term" value="C:cytoplasm"/>
    <property type="evidence" value="ECO:0000266"/>
    <property type="project" value="RGD"/>
</dbReference>
<dbReference type="GO" id="GO:0005634">
    <property type="term" value="C:nucleus"/>
    <property type="evidence" value="ECO:0000266"/>
    <property type="project" value="RGD"/>
</dbReference>
<dbReference type="GO" id="GO:0005212">
    <property type="term" value="F:structural constituent of eye lens"/>
    <property type="evidence" value="ECO:0000318"/>
    <property type="project" value="GO_Central"/>
</dbReference>
<dbReference type="GO" id="GO:0043010">
    <property type="term" value="P:camera-type eye development"/>
    <property type="evidence" value="ECO:0000266"/>
    <property type="project" value="RGD"/>
</dbReference>
<dbReference type="GO" id="GO:0001654">
    <property type="term" value="P:eye development"/>
    <property type="evidence" value="ECO:0000266"/>
    <property type="project" value="RGD"/>
</dbReference>
<dbReference type="GO" id="GO:0002088">
    <property type="term" value="P:lens development in camera-type eye"/>
    <property type="evidence" value="ECO:0000270"/>
    <property type="project" value="RGD"/>
</dbReference>
<dbReference type="GO" id="GO:0007601">
    <property type="term" value="P:visual perception"/>
    <property type="evidence" value="ECO:0000266"/>
    <property type="project" value="RGD"/>
</dbReference>
<dbReference type="FunFam" id="2.60.20.10:FF:000001">
    <property type="entry name" value="Crystallin gamma S"/>
    <property type="match status" value="1"/>
</dbReference>
<dbReference type="FunFam" id="2.60.20.10:FF:000003">
    <property type="entry name" value="Crystallin gamma S"/>
    <property type="match status" value="1"/>
</dbReference>
<dbReference type="Gene3D" id="2.60.20.10">
    <property type="entry name" value="Crystallins"/>
    <property type="match status" value="2"/>
</dbReference>
<dbReference type="InterPro" id="IPR050252">
    <property type="entry name" value="Beta/Gamma-Crystallin"/>
</dbReference>
<dbReference type="InterPro" id="IPR001064">
    <property type="entry name" value="Beta/gamma_crystallin"/>
</dbReference>
<dbReference type="InterPro" id="IPR011024">
    <property type="entry name" value="G_crystallin-like"/>
</dbReference>
<dbReference type="PANTHER" id="PTHR11818">
    <property type="entry name" value="BETA/GAMMA CRYSTALLIN"/>
    <property type="match status" value="1"/>
</dbReference>
<dbReference type="PANTHER" id="PTHR11818:SF32">
    <property type="entry name" value="GAMMA-CRYSTALLIN C"/>
    <property type="match status" value="1"/>
</dbReference>
<dbReference type="Pfam" id="PF00030">
    <property type="entry name" value="Crystall"/>
    <property type="match status" value="2"/>
</dbReference>
<dbReference type="PRINTS" id="PR01367">
    <property type="entry name" value="BGCRYSTALLIN"/>
</dbReference>
<dbReference type="SMART" id="SM00247">
    <property type="entry name" value="XTALbg"/>
    <property type="match status" value="2"/>
</dbReference>
<dbReference type="SUPFAM" id="SSF49695">
    <property type="entry name" value="gamma-Crystallin-like"/>
    <property type="match status" value="1"/>
</dbReference>
<dbReference type="PROSITE" id="PS50915">
    <property type="entry name" value="CRYSTALLIN_BETA_GAMMA"/>
    <property type="match status" value="4"/>
</dbReference>
<gene>
    <name type="primary">Crygc</name>
</gene>
<keyword id="KW-0273">Eye lens protein</keyword>
<keyword id="KW-0488">Methylation</keyword>
<keyword id="KW-1185">Reference proteome</keyword>
<keyword id="KW-0677">Repeat</keyword>
<accession>P02529</accession>
<organism>
    <name type="scientific">Rattus norvegicus</name>
    <name type="common">Rat</name>
    <dbReference type="NCBI Taxonomy" id="10116"/>
    <lineage>
        <taxon>Eukaryota</taxon>
        <taxon>Metazoa</taxon>
        <taxon>Chordata</taxon>
        <taxon>Craniata</taxon>
        <taxon>Vertebrata</taxon>
        <taxon>Euteleostomi</taxon>
        <taxon>Mammalia</taxon>
        <taxon>Eutheria</taxon>
        <taxon>Euarchontoglires</taxon>
        <taxon>Glires</taxon>
        <taxon>Rodentia</taxon>
        <taxon>Myomorpha</taxon>
        <taxon>Muroidea</taxon>
        <taxon>Muridae</taxon>
        <taxon>Murinae</taxon>
        <taxon>Rattus</taxon>
    </lineage>
</organism>
<proteinExistence type="evidence at transcript level"/>
<feature type="chain" id="PRO_0000057591" description="Gamma-crystallin C">
    <location>
        <begin position="1"/>
        <end position="174"/>
    </location>
</feature>
<feature type="domain" description="Beta/gamma crystallin 'Greek key' 1" evidence="2">
    <location>
        <begin position="2"/>
        <end position="40"/>
    </location>
</feature>
<feature type="domain" description="Beta/gamma crystallin 'Greek key' 2" evidence="2">
    <location>
        <begin position="41"/>
        <end position="83"/>
    </location>
</feature>
<feature type="domain" description="Beta/gamma crystallin 'Greek key' 3" evidence="2">
    <location>
        <begin position="88"/>
        <end position="128"/>
    </location>
</feature>
<feature type="domain" description="Beta/gamma crystallin 'Greek key' 4" evidence="2">
    <location>
        <begin position="129"/>
        <end position="171"/>
    </location>
</feature>
<feature type="region of interest" description="Connecting peptide">
    <location>
        <begin position="84"/>
        <end position="87"/>
    </location>
</feature>
<feature type="modified residue" description="S-methylcysteine" evidence="1">
    <location>
        <position position="23"/>
    </location>
</feature>
<feature type="sequence conflict" description="In Ref. 1; no nucleotide entry and 3; AAA40986." evidence="3" ref="1 3">
    <original>C</original>
    <variation>S</variation>
    <location>
        <position position="16"/>
    </location>
</feature>
<feature type="sequence conflict" description="In Ref. 1; no nucleotide entry and 3; AAA40986." evidence="3" ref="1 3">
    <original>I</original>
    <variation>V</variation>
    <location>
        <position position="36"/>
    </location>
</feature>
<feature type="sequence conflict" description="In Ref. 3; AAA40986." evidence="3" ref="3">
    <original>H</original>
    <variation>R</variation>
    <location>
        <position position="84"/>
    </location>
</feature>
<feature type="sequence conflict" description="In Ref. 3; AAA40986." evidence="3" ref="3">
    <original>H</original>
    <variation>Q</variation>
    <location>
        <position position="88"/>
    </location>
</feature>
<feature type="sequence conflict" description="In Ref. 3; AAA40986." evidence="3" ref="3">
    <original>RV</original>
    <variation>SA</variation>
    <location>
        <begin position="169"/>
        <end position="170"/>
    </location>
</feature>
<protein>
    <recommendedName>
        <fullName>Gamma-crystallin C</fullName>
    </recommendedName>
    <alternativeName>
        <fullName>Gamma-C-crystallin</fullName>
    </alternativeName>
    <alternativeName>
        <fullName>Gamma-crystallin 2-1</fullName>
    </alternativeName>
</protein>
<comment type="function">
    <text>Crystallins are the dominant structural components of the vertebrate eye lens.</text>
</comment>
<comment type="domain">
    <text>Has a two-domain beta-structure, folded into four very similar Greek key motifs.</text>
</comment>
<comment type="miscellaneous">
    <text>There are six different gamma crystallins identified in rat lens.</text>
</comment>
<comment type="similarity">
    <text evidence="3">Belongs to the beta/gamma-crystallin family.</text>
</comment>